<sequence>MKLPVREFDAVVIGAGGAGMRAALQISQSGQTCALLSKVFPTRSHTVSAQGGITVALGNTHEDNWEWHMYDTVKGSDYIGDQDAIEYMCKTGPEAILELEHMGLPFSRLDDGRIYQRPFGGQSKNFGGEQAARTAAAADRTGHALLHTLYQQNLKNHTTIFSEWYALDLVKNQDGAVVGCTALCIETGEVVYFKARATVLATGGAGRIYQSTTNAHINTGDGVGMAIRAGVPVQDMEMWQFHPTGIAGAGVLVTEGCRGEGGYLLNKHGERFMERYAPNAKDLAGRDVVARSIMIEIREGRGCDGPWGPHAKLKLDHLGKEVLESRLPGILELSRTFAHVDPVKEPIPVIPTCHYMMGGIPTKVTGQALTVNEKGEDVVVPGLFAVGEIACVSVHGANRLGGNSLLDLVVFGRAAGLHLQESIAEQGALRDASESDVEASLDRLNRWNNNRNGEDPVAIRKALQECMQHNFSVFREGDAMAKGLEQLKVIRERLKNARLDDTSSEFNTQRVECLELDNLMETAYATAVSANFRTESRGAHSRFDFPDRDDENWLCHSLYLPESESMTRRSVNMEPKLRPAFPPKIRTY</sequence>
<name>SDHA_ECOLI</name>
<reference key="1">
    <citation type="journal article" date="1984" name="Biochem. J.">
        <title>Nucleotide sequence encoding the flavoprotein and hydrophobic subunits of the succinate dehydrogenase of Escherichia coli.</title>
        <authorList>
            <person name="Wood D."/>
            <person name="Darlison M.G."/>
            <person name="Wilde R.J."/>
            <person name="Guest J.R."/>
        </authorList>
    </citation>
    <scope>NUCLEOTIDE SEQUENCE [GENOMIC DNA]</scope>
    <source>
        <strain>K12</strain>
    </source>
</reference>
<reference key="2">
    <citation type="journal article" date="1996" name="DNA Res.">
        <title>A 718-kb DNA sequence of the Escherichia coli K-12 genome corresponding to the 12.7-28.0 min region on the linkage map.</title>
        <authorList>
            <person name="Oshima T."/>
            <person name="Aiba H."/>
            <person name="Baba T."/>
            <person name="Fujita K."/>
            <person name="Hayashi K."/>
            <person name="Honjo A."/>
            <person name="Ikemoto K."/>
            <person name="Inada T."/>
            <person name="Itoh T."/>
            <person name="Kajihara M."/>
            <person name="Kanai K."/>
            <person name="Kashimoto K."/>
            <person name="Kimura S."/>
            <person name="Kitagawa M."/>
            <person name="Makino K."/>
            <person name="Masuda S."/>
            <person name="Miki T."/>
            <person name="Mizobuchi K."/>
            <person name="Mori H."/>
            <person name="Motomura K."/>
            <person name="Nakamura Y."/>
            <person name="Nashimoto H."/>
            <person name="Nishio Y."/>
            <person name="Saito N."/>
            <person name="Sampei G."/>
            <person name="Seki Y."/>
            <person name="Tagami H."/>
            <person name="Takemoto K."/>
            <person name="Wada C."/>
            <person name="Yamamoto Y."/>
            <person name="Yano M."/>
            <person name="Horiuchi T."/>
        </authorList>
    </citation>
    <scope>NUCLEOTIDE SEQUENCE [LARGE SCALE GENOMIC DNA]</scope>
    <source>
        <strain>K12 / W3110 / ATCC 27325 / DSM 5911</strain>
    </source>
</reference>
<reference key="3">
    <citation type="journal article" date="1997" name="Science">
        <title>The complete genome sequence of Escherichia coli K-12.</title>
        <authorList>
            <person name="Blattner F.R."/>
            <person name="Plunkett G. III"/>
            <person name="Bloch C.A."/>
            <person name="Perna N.T."/>
            <person name="Burland V."/>
            <person name="Riley M."/>
            <person name="Collado-Vides J."/>
            <person name="Glasner J.D."/>
            <person name="Rode C.K."/>
            <person name="Mayhew G.F."/>
            <person name="Gregor J."/>
            <person name="Davis N.W."/>
            <person name="Kirkpatrick H.A."/>
            <person name="Goeden M.A."/>
            <person name="Rose D.J."/>
            <person name="Mau B."/>
            <person name="Shao Y."/>
        </authorList>
    </citation>
    <scope>NUCLEOTIDE SEQUENCE [LARGE SCALE GENOMIC DNA]</scope>
    <source>
        <strain>K12 / MG1655 / ATCC 47076</strain>
    </source>
</reference>
<reference key="4">
    <citation type="journal article" date="2006" name="Mol. Syst. Biol.">
        <title>Highly accurate genome sequences of Escherichia coli K-12 strains MG1655 and W3110.</title>
        <authorList>
            <person name="Hayashi K."/>
            <person name="Morooka N."/>
            <person name="Yamamoto Y."/>
            <person name="Fujita K."/>
            <person name="Isono K."/>
            <person name="Choi S."/>
            <person name="Ohtsubo E."/>
            <person name="Baba T."/>
            <person name="Wanner B.L."/>
            <person name="Mori H."/>
            <person name="Horiuchi T."/>
        </authorList>
    </citation>
    <scope>NUCLEOTIDE SEQUENCE [LARGE SCALE GENOMIC DNA]</scope>
    <source>
        <strain>K12 / W3110 / ATCC 27325 / DSM 5911</strain>
    </source>
</reference>
<reference key="5">
    <citation type="journal article" date="1984" name="Biochem. J.">
        <title>Nucleotide sequence encoding the iron-sulphur protein subunit of the succinate dehydrogenase of Escherichia coli.</title>
        <authorList>
            <person name="Darlison M.G."/>
            <person name="Guest J.R."/>
        </authorList>
    </citation>
    <scope>NUCLEOTIDE SEQUENCE [GENOMIC DNA] OF 578-588</scope>
    <source>
        <strain>K12</strain>
    </source>
</reference>
<reference key="6">
    <citation type="journal article" date="1997" name="Electrophoresis">
        <title>Comparing the predicted and observed properties of proteins encoded in the genome of Escherichia coli K-12.</title>
        <authorList>
            <person name="Link A.J."/>
            <person name="Robison K."/>
            <person name="Church G.M."/>
        </authorList>
    </citation>
    <scope>PROTEIN SEQUENCE OF 1-12</scope>
    <source>
        <strain>K12 / EMG2</strain>
    </source>
</reference>
<reference key="7">
    <citation type="journal article" date="1998" name="J. Mol. Biol.">
        <title>Protein identification with N and C-terminal sequence tags in proteome projects.</title>
        <authorList>
            <person name="Wilkins M.R."/>
            <person name="Gasteiger E."/>
            <person name="Tonella L."/>
            <person name="Ou K."/>
            <person name="Tyler M."/>
            <person name="Sanchez J.-C."/>
            <person name="Gooley A.A."/>
            <person name="Walsh B.J."/>
            <person name="Bairoch A."/>
            <person name="Appel R.D."/>
            <person name="Williams K.L."/>
            <person name="Hochstrasser D.F."/>
        </authorList>
    </citation>
    <scope>PROTEIN SEQUENCE OF 1-4</scope>
    <source>
        <strain>K12 / W3110 / ATCC 27325 / DSM 5911</strain>
    </source>
</reference>
<reference key="8">
    <citation type="journal article" date="1997" name="Electrophoresis">
        <title>Escherichia coli proteome analysis using the gene-protein database.</title>
        <authorList>
            <person name="VanBogelen R.A."/>
            <person name="Abshire K.Z."/>
            <person name="Moldover B."/>
            <person name="Olson E.R."/>
            <person name="Neidhardt F.C."/>
        </authorList>
    </citation>
    <scope>IDENTIFICATION BY 2D-GEL</scope>
</reference>
<reference key="9">
    <citation type="journal article" date="2005" name="J. Biol. Chem.">
        <title>Protein complexes of the Escherichia coli cell envelope.</title>
        <authorList>
            <person name="Stenberg F."/>
            <person name="Chovanec P."/>
            <person name="Maslen S.L."/>
            <person name="Robinson C.V."/>
            <person name="Ilag L."/>
            <person name="von Heijne G."/>
            <person name="Daley D.O."/>
        </authorList>
    </citation>
    <scope>SUBUNIT</scope>
    <scope>SUBCELLULAR LOCATION</scope>
    <source>
        <strain>BL21-DE3</strain>
    </source>
</reference>
<reference key="10">
    <citation type="journal article" date="2009" name="Mol. Cell. Proteomics">
        <title>Lysine acetylation is a highly abundant and evolutionarily conserved modification in Escherichia coli.</title>
        <authorList>
            <person name="Zhang J."/>
            <person name="Sprung R."/>
            <person name="Pei J."/>
            <person name="Tan X."/>
            <person name="Kim S."/>
            <person name="Zhu H."/>
            <person name="Liu C.F."/>
            <person name="Grishin N.V."/>
            <person name="Zhao Y."/>
        </authorList>
    </citation>
    <scope>ACETYLATION [LARGE SCALE ANALYSIS] AT LYS-267</scope>
    <scope>IDENTIFICATION BY MASS SPECTROMETRY</scope>
    <source>
        <strain>K12 / JW1106</strain>
        <strain>K12 / MG1655 / ATCC 47076</strain>
    </source>
</reference>
<reference key="11">
    <citation type="journal article" date="2014" name="FEBS Lett.">
        <title>The succinate dehydrogenase assembly factor, SdhE, is required for the flavinylation and activation of fumarate reductase in bacteria.</title>
        <authorList>
            <person name="McNeil M.B."/>
            <person name="Hampton H.G."/>
            <person name="Hards K.J."/>
            <person name="Watson B.N."/>
            <person name="Cook G.M."/>
            <person name="Fineran P.C."/>
        </authorList>
    </citation>
    <scope>FUNCTION</scope>
    <scope>DISRUPTION PHENOTYPE</scope>
    <source>
        <strain>K12 / BW25113</strain>
    </source>
</reference>
<reference key="12">
    <citation type="journal article" date="2016" name="J. Biol. Chem.">
        <title>Binding of the covalent flavin assembly factor to the flavoprotein subunit of complex II.</title>
        <authorList>
            <person name="Maklashina E."/>
            <person name="Rajagukguk S."/>
            <person name="Starbird C.A."/>
            <person name="McDonald W.H."/>
            <person name="Koganitsky A."/>
            <person name="Eisenbach M."/>
            <person name="Iverson T.M."/>
            <person name="Cecchini G."/>
        </authorList>
    </citation>
    <scope>COFACTOR</scope>
    <scope>SUBUNIT</scope>
    <scope>MUTAGENESIS OF GLU-186 AND THR-187</scope>
    <source>
        <strain>K12 / RP437</strain>
    </source>
</reference>
<reference key="13">
    <citation type="journal article" date="2003" name="Science">
        <title>Architecture of succinate dehydrogenase and reactive oxygen species generation.</title>
        <authorList>
            <person name="Yankovskaya V."/>
            <person name="Horsefield R."/>
            <person name="Toernroth S."/>
            <person name="Luna-Chavez C."/>
            <person name="Miyoshi H."/>
            <person name="Leger C."/>
            <person name="Byrne B."/>
            <person name="Cecchini G."/>
            <person name="Iwata S."/>
        </authorList>
    </citation>
    <scope>X-RAY CRYSTALLOGRAPHY (2.6 ANGSTROMS) IN COMPLEX WITH FAD AND OXALOACETATE</scope>
    <scope>FUNCTION</scope>
    <scope>COFACTOR</scope>
    <scope>ACTIVITY REGULATION</scope>
    <scope>SUBCELLULAR LOCATION</scope>
    <scope>SUBUNIT</scope>
</reference>
<reference key="14">
    <citation type="journal article" date="2006" name="J. Biol. Chem.">
        <title>Structural and computational analysis of the quinone-binding site of complex II (succinate-ubiquinone oxidoreductase): a mechanism of electron transfer and proton conduction during ubiquinone reduction.</title>
        <authorList>
            <person name="Horsefield R."/>
            <person name="Yankovskaya V."/>
            <person name="Sexton G."/>
            <person name="Whittingham W."/>
            <person name="Shiomi K."/>
            <person name="Omura S."/>
            <person name="Byrne B."/>
            <person name="Cecchini G."/>
            <person name="Iwata S."/>
        </authorList>
    </citation>
    <scope>X-RAY CRYSTALLOGRAPHY (3.1 ANGSTROMS) IN COMPLEX WITH FAD AND OXALOACETATE</scope>
    <scope>FUNCTION</scope>
    <scope>COFACTOR</scope>
    <scope>SUBUNIT</scope>
</reference>
<reference key="15">
    <citation type="journal article" date="2009" name="J. Biol. Chem.">
        <title>Structure of Escherichia coli succinate:quinone oxidoreductase with an occupied and empty quinone-binding site.</title>
        <authorList>
            <person name="Ruprecht J."/>
            <person name="Yankovskaya V."/>
            <person name="Maklashina E."/>
            <person name="Iwata S."/>
            <person name="Cecchini G."/>
        </authorList>
    </citation>
    <scope>X-RAY CRYSTALLOGRAPHY (2.4 ANGSTROMS) IN COMPLEX WITH FAD AND MALATE-LIKE INTERMEDIATE</scope>
    <scope>FUNCTION</scope>
    <scope>COFACTOR</scope>
    <scope>CATALYTIC ACTIVITY</scope>
    <scope>PATHWAY</scope>
    <scope>SUBUNIT</scope>
    <scope>ACTIVE SITE</scope>
</reference>
<evidence type="ECO:0000269" key="1">
    <source>
    </source>
</evidence>
<evidence type="ECO:0000269" key="2">
    <source>
    </source>
</evidence>
<evidence type="ECO:0000269" key="3">
    <source>
    </source>
</evidence>
<evidence type="ECO:0000269" key="4">
    <source>
    </source>
</evidence>
<evidence type="ECO:0000269" key="5">
    <source>
    </source>
</evidence>
<evidence type="ECO:0000269" key="6">
    <source>
    </source>
</evidence>
<evidence type="ECO:0000269" key="7">
    <source>
    </source>
</evidence>
<evidence type="ECO:0000305" key="8"/>
<evidence type="ECO:0000305" key="9">
    <source>
    </source>
</evidence>
<evidence type="ECO:0000305" key="10">
    <source>
    </source>
</evidence>
<evidence type="ECO:0000305" key="11">
    <source>
    </source>
</evidence>
<evidence type="ECO:0007829" key="12">
    <source>
        <dbReference type="PDB" id="1NEK"/>
    </source>
</evidence>
<evidence type="ECO:0007829" key="13">
    <source>
        <dbReference type="PDB" id="2ACZ"/>
    </source>
</evidence>
<evidence type="ECO:0007829" key="14">
    <source>
        <dbReference type="PDB" id="2WDQ"/>
    </source>
</evidence>
<evidence type="ECO:0007829" key="15">
    <source>
        <dbReference type="PDB" id="2WU2"/>
    </source>
</evidence>
<evidence type="ECO:0007829" key="16">
    <source>
        <dbReference type="PDB" id="6C12"/>
    </source>
</evidence>
<evidence type="ECO:0007829" key="17">
    <source>
        <dbReference type="PDB" id="7JZ2"/>
    </source>
</evidence>
<keyword id="KW-0002">3D-structure</keyword>
<keyword id="KW-0007">Acetylation</keyword>
<keyword id="KW-0997">Cell inner membrane</keyword>
<keyword id="KW-1003">Cell membrane</keyword>
<keyword id="KW-0903">Direct protein sequencing</keyword>
<keyword id="KW-0249">Electron transport</keyword>
<keyword id="KW-0274">FAD</keyword>
<keyword id="KW-0285">Flavoprotein</keyword>
<keyword id="KW-0472">Membrane</keyword>
<keyword id="KW-0560">Oxidoreductase</keyword>
<keyword id="KW-1185">Reference proteome</keyword>
<keyword id="KW-0813">Transport</keyword>
<keyword id="KW-0816">Tricarboxylic acid cycle</keyword>
<comment type="function">
    <text evidence="6 9 10 11">Two distinct, membrane-bound, FAD-containing enzymes are responsible for the catalysis of fumarate and succinate interconversion; the fumarate reductase is used in anaerobic growth, and the succinate dehydrogenase is used in aerobic growth.</text>
</comment>
<comment type="catalytic activity">
    <reaction evidence="11">
        <text>a quinone + succinate = fumarate + a quinol</text>
        <dbReference type="Rhea" id="RHEA:40523"/>
        <dbReference type="ChEBI" id="CHEBI:24646"/>
        <dbReference type="ChEBI" id="CHEBI:29806"/>
        <dbReference type="ChEBI" id="CHEBI:30031"/>
        <dbReference type="ChEBI" id="CHEBI:132124"/>
        <dbReference type="EC" id="1.3.5.1"/>
    </reaction>
</comment>
<comment type="cofactor">
    <cofactor evidence="1 3 5">
        <name>FAD</name>
        <dbReference type="ChEBI" id="CHEBI:57692"/>
    </cofactor>
    <text evidence="7">Flavinylated by SdhE, about 5% flavinylation occurs in the absence of SdhE.</text>
</comment>
<comment type="activity regulation">
    <text evidence="1">Inhibited by oxaloacetate.</text>
</comment>
<comment type="pathway">
    <text evidence="11">Carbohydrate metabolism; tricarboxylic acid cycle; fumarate from succinate (bacterial route): step 1/1.</text>
</comment>
<comment type="subunit">
    <text evidence="1 2 3 5 7">Part of an enzyme complex containing four subunits: a flavoprotein, an iron-sulfur, cytochrome b-556, and a hydrophobic anchor protein. The complex forms trimers. Can be cross-linked to SdhE (PubMed:26644464).</text>
</comment>
<comment type="interaction">
    <interactant intactId="EBI-371263">
        <id>P0AC41</id>
    </interactant>
    <interactant intactId="EBI-1035514">
        <id>P07014</id>
        <label>sdhB</label>
    </interactant>
    <organismsDiffer>false</organismsDiffer>
    <experiments>2</experiments>
</comment>
<comment type="subcellular location">
    <subcellularLocation>
        <location evidence="1 2">Cell inner membrane</location>
        <topology evidence="1 2">Peripheral membrane protein</topology>
        <orientation evidence="1 2">Cytoplasmic side</orientation>
    </subcellularLocation>
</comment>
<comment type="disruption phenotype">
    <text evidence="4">No effect on anaerobic growth on glycerol fumarate medium.</text>
</comment>
<comment type="similarity">
    <text evidence="8">Belongs to the FAD-dependent oxidoreductase 2 family. FRD/SDH subfamily.</text>
</comment>
<gene>
    <name type="primary">sdhA</name>
    <name type="ordered locus">b0723</name>
    <name type="ordered locus">JW0713</name>
</gene>
<protein>
    <recommendedName>
        <fullName>Succinate dehydrogenase flavoprotein subunit</fullName>
        <ecNumber evidence="11">1.3.5.1</ecNumber>
    </recommendedName>
</protein>
<feature type="chain" id="PRO_0000158652" description="Succinate dehydrogenase flavoprotein subunit">
    <location>
        <begin position="1"/>
        <end position="588"/>
    </location>
</feature>
<feature type="active site" description="Proton acceptor" evidence="5">
    <location>
        <position position="286"/>
    </location>
</feature>
<feature type="binding site" evidence="1 3 5">
    <location>
        <begin position="14"/>
        <end position="19"/>
    </location>
    <ligand>
        <name>FAD</name>
        <dbReference type="ChEBI" id="CHEBI:57692"/>
    </ligand>
</feature>
<feature type="binding site" evidence="1 3 5">
    <location>
        <begin position="37"/>
        <end position="52"/>
    </location>
    <ligand>
        <name>FAD</name>
        <dbReference type="ChEBI" id="CHEBI:57692"/>
    </ligand>
</feature>
<feature type="binding site" evidence="1 3 5">
    <location>
        <position position="221"/>
    </location>
    <ligand>
        <name>FAD</name>
        <dbReference type="ChEBI" id="CHEBI:57692"/>
    </ligand>
</feature>
<feature type="binding site" evidence="5">
    <location>
        <position position="242"/>
    </location>
    <ligand>
        <name>substrate</name>
    </ligand>
</feature>
<feature type="binding site" evidence="5">
    <location>
        <position position="254"/>
    </location>
    <ligand>
        <name>substrate</name>
    </ligand>
</feature>
<feature type="binding site" evidence="5">
    <location>
        <position position="354"/>
    </location>
    <ligand>
        <name>substrate</name>
    </ligand>
</feature>
<feature type="binding site" evidence="1 3 5">
    <location>
        <position position="388"/>
    </location>
    <ligand>
        <name>FAD</name>
        <dbReference type="ChEBI" id="CHEBI:57692"/>
    </ligand>
</feature>
<feature type="binding site" evidence="5">
    <location>
        <position position="399"/>
    </location>
    <ligand>
        <name>substrate</name>
    </ligand>
</feature>
<feature type="binding site" evidence="1 3 5">
    <location>
        <begin position="404"/>
        <end position="405"/>
    </location>
    <ligand>
        <name>FAD</name>
        <dbReference type="ChEBI" id="CHEBI:57692"/>
    </ligand>
</feature>
<feature type="modified residue" description="Tele-8alpha-FAD histidine" evidence="1 3 5">
    <location>
        <position position="45"/>
    </location>
</feature>
<feature type="modified residue" description="N6-acetyllysine" evidence="4">
    <location>
        <position position="267"/>
    </location>
</feature>
<feature type="mutagenesis site" description="Allows recovery of protein cross-linked to SdhE, SdhA is flavinylated." evidence="7">
    <original>E</original>
    <variation>M</variation>
    <location>
        <position position="186"/>
    </location>
</feature>
<feature type="mutagenesis site" description="No recovery of protein cross-linked to SdhE, SdhA is flavinylated." evidence="7">
    <original>T</original>
    <variation>M</variation>
    <location>
        <position position="187"/>
    </location>
</feature>
<feature type="sequence conflict" description="In Ref. 1; AAA23895/CAA25487." evidence="8" ref="1">
    <original>MRA</original>
    <variation>IAR</variation>
    <location>
        <begin position="20"/>
        <end position="22"/>
    </location>
</feature>
<feature type="strand" evidence="16">
    <location>
        <begin position="5"/>
        <end position="13"/>
    </location>
</feature>
<feature type="helix" evidence="16">
    <location>
        <begin position="17"/>
        <end position="28"/>
    </location>
</feature>
<feature type="strand" evidence="16">
    <location>
        <begin position="33"/>
        <end position="39"/>
    </location>
</feature>
<feature type="helix" evidence="16">
    <location>
        <begin position="41"/>
        <end position="43"/>
    </location>
</feature>
<feature type="helix" evidence="16">
    <location>
        <begin position="45"/>
        <end position="48"/>
    </location>
</feature>
<feature type="strand" evidence="14">
    <location>
        <begin position="59"/>
        <end position="61"/>
    </location>
</feature>
<feature type="helix" evidence="16">
    <location>
        <begin position="65"/>
        <end position="75"/>
    </location>
</feature>
<feature type="turn" evidence="16">
    <location>
        <begin position="76"/>
        <end position="78"/>
    </location>
</feature>
<feature type="helix" evidence="16">
    <location>
        <begin position="82"/>
        <end position="100"/>
    </location>
</feature>
<feature type="turn" evidence="13">
    <location>
        <begin position="101"/>
        <end position="103"/>
    </location>
</feature>
<feature type="strand" evidence="14">
    <location>
        <begin position="112"/>
        <end position="114"/>
    </location>
</feature>
<feature type="strand" evidence="12">
    <location>
        <begin position="119"/>
        <end position="121"/>
    </location>
</feature>
<feature type="turn" evidence="14">
    <location>
        <begin position="125"/>
        <end position="127"/>
    </location>
</feature>
<feature type="strand" evidence="12">
    <location>
        <begin position="129"/>
        <end position="135"/>
    </location>
</feature>
<feature type="helix" evidence="16">
    <location>
        <begin position="141"/>
        <end position="155"/>
    </location>
</feature>
<feature type="strand" evidence="16">
    <location>
        <begin position="159"/>
        <end position="162"/>
    </location>
</feature>
<feature type="strand" evidence="16">
    <location>
        <begin position="164"/>
        <end position="171"/>
    </location>
</feature>
<feature type="strand" evidence="16">
    <location>
        <begin position="177"/>
        <end position="184"/>
    </location>
</feature>
<feature type="turn" evidence="16">
    <location>
        <begin position="185"/>
        <end position="187"/>
    </location>
</feature>
<feature type="strand" evidence="16">
    <location>
        <begin position="190"/>
        <end position="200"/>
    </location>
</feature>
<feature type="helix" evidence="16">
    <location>
        <begin position="206"/>
        <end position="208"/>
    </location>
</feature>
<feature type="strand" evidence="16">
    <location>
        <begin position="209"/>
        <end position="214"/>
    </location>
</feature>
<feature type="helix" evidence="16">
    <location>
        <begin position="221"/>
        <end position="228"/>
    </location>
</feature>
<feature type="strand" evidence="17">
    <location>
        <begin position="233"/>
        <end position="235"/>
    </location>
</feature>
<feature type="strand" evidence="16">
    <location>
        <begin position="239"/>
        <end position="246"/>
    </location>
</feature>
<feature type="turn" evidence="16">
    <location>
        <begin position="247"/>
        <end position="249"/>
    </location>
</feature>
<feature type="helix" evidence="16">
    <location>
        <begin position="256"/>
        <end position="259"/>
    </location>
</feature>
<feature type="strand" evidence="16">
    <location>
        <begin position="263"/>
        <end position="265"/>
    </location>
</feature>
<feature type="helix" evidence="16">
    <location>
        <begin position="273"/>
        <end position="276"/>
    </location>
</feature>
<feature type="turn" evidence="16">
    <location>
        <begin position="278"/>
        <end position="280"/>
    </location>
</feature>
<feature type="helix" evidence="16">
    <location>
        <begin position="281"/>
        <end position="283"/>
    </location>
</feature>
<feature type="helix" evidence="16">
    <location>
        <begin position="286"/>
        <end position="298"/>
    </location>
</feature>
<feature type="strand" evidence="12">
    <location>
        <begin position="305"/>
        <end position="307"/>
    </location>
</feature>
<feature type="strand" evidence="16">
    <location>
        <begin position="309"/>
        <end position="314"/>
    </location>
</feature>
<feature type="helix" evidence="16">
    <location>
        <begin position="316"/>
        <end position="318"/>
    </location>
</feature>
<feature type="helix" evidence="16">
    <location>
        <begin position="320"/>
        <end position="326"/>
    </location>
</feature>
<feature type="helix" evidence="16">
    <location>
        <begin position="328"/>
        <end position="337"/>
    </location>
</feature>
<feature type="turn" evidence="16">
    <location>
        <begin position="342"/>
        <end position="344"/>
    </location>
</feature>
<feature type="strand" evidence="16">
    <location>
        <begin position="347"/>
        <end position="356"/>
    </location>
</feature>
<feature type="strand" evidence="16">
    <location>
        <begin position="359"/>
        <end position="362"/>
    </location>
</feature>
<feature type="strand" evidence="16">
    <location>
        <begin position="367"/>
        <end position="371"/>
    </location>
</feature>
<feature type="strand" evidence="12">
    <location>
        <begin position="373"/>
        <end position="375"/>
    </location>
</feature>
<feature type="strand" evidence="16">
    <location>
        <begin position="377"/>
        <end position="385"/>
    </location>
</feature>
<feature type="helix" evidence="14">
    <location>
        <begin position="387"/>
        <end position="389"/>
    </location>
</feature>
<feature type="strand" evidence="14">
    <location>
        <begin position="393"/>
        <end position="395"/>
    </location>
</feature>
<feature type="helix" evidence="16">
    <location>
        <begin position="403"/>
        <end position="417"/>
    </location>
</feature>
<feature type="helix" evidence="16">
    <location>
        <begin position="419"/>
        <end position="426"/>
    </location>
</feature>
<feature type="helix" evidence="16">
    <location>
        <begin position="434"/>
        <end position="439"/>
    </location>
</feature>
<feature type="helix" evidence="16">
    <location>
        <begin position="442"/>
        <end position="448"/>
    </location>
</feature>
<feature type="strand" evidence="16">
    <location>
        <begin position="451"/>
        <end position="454"/>
    </location>
</feature>
<feature type="helix" evidence="16">
    <location>
        <begin position="456"/>
        <end position="471"/>
    </location>
</feature>
<feature type="strand" evidence="12">
    <location>
        <begin position="472"/>
        <end position="475"/>
    </location>
</feature>
<feature type="helix" evidence="16">
    <location>
        <begin position="477"/>
        <end position="494"/>
    </location>
</feature>
<feature type="strand" evidence="15">
    <location>
        <begin position="504"/>
        <end position="506"/>
    </location>
</feature>
<feature type="helix" evidence="16">
    <location>
        <begin position="508"/>
        <end position="532"/>
    </location>
</feature>
<feature type="strand" evidence="17">
    <location>
        <begin position="535"/>
        <end position="537"/>
    </location>
</feature>
<feature type="strand" evidence="16">
    <location>
        <begin position="542"/>
        <end position="545"/>
    </location>
</feature>
<feature type="helix" evidence="16">
    <location>
        <begin position="550"/>
        <end position="553"/>
    </location>
</feature>
<feature type="strand" evidence="16">
    <location>
        <begin position="554"/>
        <end position="560"/>
    </location>
</feature>
<feature type="turn" evidence="16">
    <location>
        <begin position="561"/>
        <end position="564"/>
    </location>
</feature>
<feature type="strand" evidence="16">
    <location>
        <begin position="565"/>
        <end position="569"/>
    </location>
</feature>
<feature type="strand" evidence="16">
    <location>
        <begin position="576"/>
        <end position="578"/>
    </location>
</feature>
<organism>
    <name type="scientific">Escherichia coli (strain K12)</name>
    <dbReference type="NCBI Taxonomy" id="83333"/>
    <lineage>
        <taxon>Bacteria</taxon>
        <taxon>Pseudomonadati</taxon>
        <taxon>Pseudomonadota</taxon>
        <taxon>Gammaproteobacteria</taxon>
        <taxon>Enterobacterales</taxon>
        <taxon>Enterobacteriaceae</taxon>
        <taxon>Escherichia</taxon>
    </lineage>
</organism>
<dbReference type="EC" id="1.3.5.1" evidence="11"/>
<dbReference type="EMBL" id="J01619">
    <property type="protein sequence ID" value="AAA23895.1"/>
    <property type="molecule type" value="Genomic_DNA"/>
</dbReference>
<dbReference type="EMBL" id="X00980">
    <property type="protein sequence ID" value="CAA25487.1"/>
    <property type="molecule type" value="Genomic_DNA"/>
</dbReference>
<dbReference type="EMBL" id="U00096">
    <property type="protein sequence ID" value="AAC73817.1"/>
    <property type="molecule type" value="Genomic_DNA"/>
</dbReference>
<dbReference type="EMBL" id="AP009048">
    <property type="protein sequence ID" value="BAA35390.1"/>
    <property type="molecule type" value="Genomic_DNA"/>
</dbReference>
<dbReference type="EMBL" id="X01070">
    <property type="protein sequence ID" value="CAA25533.1"/>
    <property type="molecule type" value="Genomic_DNA"/>
</dbReference>
<dbReference type="PIR" id="B64808">
    <property type="entry name" value="DEECSF"/>
</dbReference>
<dbReference type="RefSeq" id="NP_415251.1">
    <property type="nucleotide sequence ID" value="NC_000913.3"/>
</dbReference>
<dbReference type="RefSeq" id="WP_000775540.1">
    <property type="nucleotide sequence ID" value="NZ_STEB01000035.1"/>
</dbReference>
<dbReference type="PDB" id="1NEK">
    <property type="method" value="X-ray"/>
    <property type="resolution" value="2.60 A"/>
    <property type="chains" value="A=1-588"/>
</dbReference>
<dbReference type="PDB" id="1NEN">
    <property type="method" value="X-ray"/>
    <property type="resolution" value="2.90 A"/>
    <property type="chains" value="A=1-588"/>
</dbReference>
<dbReference type="PDB" id="2ACZ">
    <property type="method" value="X-ray"/>
    <property type="resolution" value="3.10 A"/>
    <property type="chains" value="A=1-588"/>
</dbReference>
<dbReference type="PDB" id="2WDQ">
    <property type="method" value="X-ray"/>
    <property type="resolution" value="2.40 A"/>
    <property type="chains" value="A/E/I=1-588"/>
</dbReference>
<dbReference type="PDB" id="2WDR">
    <property type="method" value="X-ray"/>
    <property type="resolution" value="3.20 A"/>
    <property type="chains" value="A/E/I=1-588"/>
</dbReference>
<dbReference type="PDB" id="2WDV">
    <property type="method" value="X-ray"/>
    <property type="resolution" value="3.20 A"/>
    <property type="chains" value="A/E/I=1-588"/>
</dbReference>
<dbReference type="PDB" id="2WP9">
    <property type="method" value="X-ray"/>
    <property type="resolution" value="2.70 A"/>
    <property type="chains" value="A/E/I=1-588"/>
</dbReference>
<dbReference type="PDB" id="2WS3">
    <property type="method" value="X-ray"/>
    <property type="resolution" value="3.20 A"/>
    <property type="chains" value="A/E/I=1-588"/>
</dbReference>
<dbReference type="PDB" id="2WU2">
    <property type="method" value="X-ray"/>
    <property type="resolution" value="2.50 A"/>
    <property type="chains" value="A/E/I=1-588"/>
</dbReference>
<dbReference type="PDB" id="2WU5">
    <property type="method" value="X-ray"/>
    <property type="resolution" value="2.80 A"/>
    <property type="chains" value="A/E/I=1-588"/>
</dbReference>
<dbReference type="PDB" id="6C12">
    <property type="method" value="X-ray"/>
    <property type="resolution" value="2.15 A"/>
    <property type="chains" value="A/B=1-588"/>
</dbReference>
<dbReference type="PDB" id="7JZ2">
    <property type="method" value="EM"/>
    <property type="resolution" value="2.50 A"/>
    <property type="chains" value="A/E/I=1-588"/>
</dbReference>
<dbReference type="PDBsum" id="1NEK"/>
<dbReference type="PDBsum" id="1NEN"/>
<dbReference type="PDBsum" id="2ACZ"/>
<dbReference type="PDBsum" id="2WDQ"/>
<dbReference type="PDBsum" id="2WDR"/>
<dbReference type="PDBsum" id="2WDV"/>
<dbReference type="PDBsum" id="2WP9"/>
<dbReference type="PDBsum" id="2WS3"/>
<dbReference type="PDBsum" id="2WU2"/>
<dbReference type="PDBsum" id="2WU5"/>
<dbReference type="PDBsum" id="6C12"/>
<dbReference type="PDBsum" id="7JZ2"/>
<dbReference type="EMDB" id="EMD-22528"/>
<dbReference type="SMR" id="P0AC41"/>
<dbReference type="BioGRID" id="4262907">
    <property type="interactions" value="126"/>
</dbReference>
<dbReference type="BioGRID" id="849776">
    <property type="interactions" value="2"/>
</dbReference>
<dbReference type="ComplexPortal" id="CPX-1931">
    <property type="entry name" value="Respiratory chain complex II"/>
</dbReference>
<dbReference type="DIP" id="DIP-31877N"/>
<dbReference type="FunCoup" id="P0AC41">
    <property type="interactions" value="909"/>
</dbReference>
<dbReference type="IntAct" id="P0AC41">
    <property type="interactions" value="91"/>
</dbReference>
<dbReference type="MINT" id="P0AC41"/>
<dbReference type="STRING" id="511145.b0723"/>
<dbReference type="DrugBank" id="DB07671">
    <property type="generic name" value="2-[1-METHYLHEXYL]-4,6-DINITROPHENOL"/>
</dbReference>
<dbReference type="DrugBank" id="DB04631">
    <property type="generic name" value="Atpenin A5"/>
</dbReference>
<dbReference type="DrugBank" id="DB08690">
    <property type="generic name" value="Ubiquinone Q2"/>
</dbReference>
<dbReference type="iPTMnet" id="P0AC41"/>
<dbReference type="jPOST" id="P0AC41"/>
<dbReference type="PaxDb" id="511145-b0723"/>
<dbReference type="EnsemblBacteria" id="AAC73817">
    <property type="protein sequence ID" value="AAC73817"/>
    <property type="gene ID" value="b0723"/>
</dbReference>
<dbReference type="GeneID" id="93776761"/>
<dbReference type="GeneID" id="945402"/>
<dbReference type="KEGG" id="ecj:JW0713"/>
<dbReference type="KEGG" id="eco:b0723"/>
<dbReference type="KEGG" id="ecoc:C3026_03620"/>
<dbReference type="PATRIC" id="fig|1411691.4.peg.1549"/>
<dbReference type="EchoBASE" id="EB0924"/>
<dbReference type="eggNOG" id="COG1053">
    <property type="taxonomic scope" value="Bacteria"/>
</dbReference>
<dbReference type="HOGENOM" id="CLU_014312_6_1_6"/>
<dbReference type="InParanoid" id="P0AC41"/>
<dbReference type="OMA" id="PTGIWRM"/>
<dbReference type="OrthoDB" id="9806724at2"/>
<dbReference type="PhylomeDB" id="P0AC41"/>
<dbReference type="BioCyc" id="EcoCyc:SDH-FLAVO"/>
<dbReference type="BioCyc" id="MetaCyc:SDH-FLAVO"/>
<dbReference type="BRENDA" id="1.3.5.1">
    <property type="organism ID" value="2026"/>
</dbReference>
<dbReference type="UniPathway" id="UPA00223">
    <property type="reaction ID" value="UER01005"/>
</dbReference>
<dbReference type="EvolutionaryTrace" id="P0AC41"/>
<dbReference type="PHI-base" id="PHI:7964"/>
<dbReference type="PRO" id="PR:P0AC41"/>
<dbReference type="Proteomes" id="UP000000625">
    <property type="component" value="Chromosome"/>
</dbReference>
<dbReference type="GO" id="GO:0016020">
    <property type="term" value="C:membrane"/>
    <property type="evidence" value="ECO:0000303"/>
    <property type="project" value="ComplexPortal"/>
</dbReference>
<dbReference type="GO" id="GO:0005886">
    <property type="term" value="C:plasma membrane"/>
    <property type="evidence" value="ECO:0000314"/>
    <property type="project" value="EcoliWiki"/>
</dbReference>
<dbReference type="GO" id="GO:0045273">
    <property type="term" value="C:respiratory chain complex II (succinate dehydrogenase)"/>
    <property type="evidence" value="ECO:0000315"/>
    <property type="project" value="EcoCyc"/>
</dbReference>
<dbReference type="GO" id="GO:0009055">
    <property type="term" value="F:electron transfer activity"/>
    <property type="evidence" value="ECO:0000314"/>
    <property type="project" value="EcoCyc"/>
</dbReference>
<dbReference type="GO" id="GO:0050660">
    <property type="term" value="F:flavin adenine dinucleotide binding"/>
    <property type="evidence" value="ECO:0000314"/>
    <property type="project" value="EcoliWiki"/>
</dbReference>
<dbReference type="GO" id="GO:0008177">
    <property type="term" value="F:succinate dehydrogenase (quinone) activity"/>
    <property type="evidence" value="ECO:0007669"/>
    <property type="project" value="UniProtKB-EC"/>
</dbReference>
<dbReference type="GO" id="GO:0000104">
    <property type="term" value="F:succinate dehydrogenase activity"/>
    <property type="evidence" value="ECO:0000315"/>
    <property type="project" value="EcoliWiki"/>
</dbReference>
<dbReference type="GO" id="GO:0019646">
    <property type="term" value="P:aerobic electron transport chain"/>
    <property type="evidence" value="ECO:0000303"/>
    <property type="project" value="ComplexPortal"/>
</dbReference>
<dbReference type="GO" id="GO:0009060">
    <property type="term" value="P:aerobic respiration"/>
    <property type="evidence" value="ECO:0000316"/>
    <property type="project" value="EcoliWiki"/>
</dbReference>
<dbReference type="GO" id="GO:0009061">
    <property type="term" value="P:anaerobic respiration"/>
    <property type="evidence" value="ECO:0000318"/>
    <property type="project" value="GO_Central"/>
</dbReference>
<dbReference type="GO" id="GO:0006099">
    <property type="term" value="P:tricarboxylic acid cycle"/>
    <property type="evidence" value="ECO:0000316"/>
    <property type="project" value="EcoliWiki"/>
</dbReference>
<dbReference type="FunFam" id="3.90.700.10:FF:000001">
    <property type="entry name" value="Mitochondrial succinate dehydrogenase flavoprotein subunit"/>
    <property type="match status" value="1"/>
</dbReference>
<dbReference type="FunFam" id="4.10.80.40:FF:000001">
    <property type="entry name" value="Succinate dehydrogenase flavoprotein subunit"/>
    <property type="match status" value="1"/>
</dbReference>
<dbReference type="FunFam" id="1.20.58.100:FF:000001">
    <property type="entry name" value="Succinate dehydrogenase flavoprotein subunit (SdhA)"/>
    <property type="match status" value="1"/>
</dbReference>
<dbReference type="Gene3D" id="3.50.50.60">
    <property type="entry name" value="FAD/NAD(P)-binding domain"/>
    <property type="match status" value="1"/>
</dbReference>
<dbReference type="Gene3D" id="1.20.58.100">
    <property type="entry name" value="Fumarate reductase/succinate dehydrogenase flavoprotein-like, C-terminal domain"/>
    <property type="match status" value="1"/>
</dbReference>
<dbReference type="Gene3D" id="4.10.80.40">
    <property type="entry name" value="succinate dehydrogenase protein domain"/>
    <property type="match status" value="1"/>
</dbReference>
<dbReference type="Gene3D" id="3.90.700.10">
    <property type="entry name" value="Succinate dehydrogenase/fumarate reductase flavoprotein, catalytic domain"/>
    <property type="match status" value="1"/>
</dbReference>
<dbReference type="InterPro" id="IPR003953">
    <property type="entry name" value="FAD-dep_OxRdtase_2_FAD-bd"/>
</dbReference>
<dbReference type="InterPro" id="IPR036188">
    <property type="entry name" value="FAD/NAD-bd_sf"/>
</dbReference>
<dbReference type="InterPro" id="IPR003952">
    <property type="entry name" value="FRD_SDH_FAD_BS"/>
</dbReference>
<dbReference type="InterPro" id="IPR037099">
    <property type="entry name" value="Fum_R/Succ_DH_flav-like_C_sf"/>
</dbReference>
<dbReference type="InterPro" id="IPR015939">
    <property type="entry name" value="Fum_Rdtase/Succ_DH_flav-like_C"/>
</dbReference>
<dbReference type="InterPro" id="IPR030664">
    <property type="entry name" value="SdhA/FrdA/AprA"/>
</dbReference>
<dbReference type="InterPro" id="IPR027477">
    <property type="entry name" value="Succ_DH/fumarate_Rdtase_cat_sf"/>
</dbReference>
<dbReference type="InterPro" id="IPR011281">
    <property type="entry name" value="Succ_DH_flav_su_fwd"/>
</dbReference>
<dbReference type="InterPro" id="IPR014006">
    <property type="entry name" value="Succ_Dhase_FrdA_Gneg"/>
</dbReference>
<dbReference type="NCBIfam" id="TIGR01816">
    <property type="entry name" value="sdhA_forward"/>
    <property type="match status" value="1"/>
</dbReference>
<dbReference type="NCBIfam" id="TIGR01812">
    <property type="entry name" value="sdhA_frdA_Gneg"/>
    <property type="match status" value="1"/>
</dbReference>
<dbReference type="PANTHER" id="PTHR11632">
    <property type="entry name" value="SUCCINATE DEHYDROGENASE 2 FLAVOPROTEIN SUBUNIT"/>
    <property type="match status" value="1"/>
</dbReference>
<dbReference type="PANTHER" id="PTHR11632:SF51">
    <property type="entry name" value="SUCCINATE DEHYDROGENASE [UBIQUINONE] FLAVOPROTEIN SUBUNIT, MITOCHONDRIAL"/>
    <property type="match status" value="1"/>
</dbReference>
<dbReference type="Pfam" id="PF00890">
    <property type="entry name" value="FAD_binding_2"/>
    <property type="match status" value="1"/>
</dbReference>
<dbReference type="Pfam" id="PF02910">
    <property type="entry name" value="Succ_DH_flav_C"/>
    <property type="match status" value="1"/>
</dbReference>
<dbReference type="PIRSF" id="PIRSF000171">
    <property type="entry name" value="SDHA_APRA_LASPO"/>
    <property type="match status" value="1"/>
</dbReference>
<dbReference type="PRINTS" id="PR00368">
    <property type="entry name" value="FADPNR"/>
</dbReference>
<dbReference type="SUPFAM" id="SSF51905">
    <property type="entry name" value="FAD/NAD(P)-binding domain"/>
    <property type="match status" value="1"/>
</dbReference>
<dbReference type="SUPFAM" id="SSF46977">
    <property type="entry name" value="Succinate dehydrogenase/fumarate reductase flavoprotein C-terminal domain"/>
    <property type="match status" value="1"/>
</dbReference>
<dbReference type="SUPFAM" id="SSF56425">
    <property type="entry name" value="Succinate dehydrogenase/fumarate reductase flavoprotein, catalytic domain"/>
    <property type="match status" value="1"/>
</dbReference>
<dbReference type="PROSITE" id="PS00504">
    <property type="entry name" value="FRD_SDH_FAD_BINDING"/>
    <property type="match status" value="1"/>
</dbReference>
<proteinExistence type="evidence at protein level"/>
<accession>P0AC41</accession>
<accession>P10444</accession>
<accession>P78282</accession>